<feature type="signal peptide" evidence="1">
    <location>
        <begin position="1"/>
        <end position="20"/>
    </location>
</feature>
<feature type="chain" id="PRO_0000036756" description="Uncharacterized 59.0 kDa protein">
    <location>
        <begin position="21"/>
        <end position="529"/>
    </location>
</feature>
<organism>
    <name type="scientific">Orgyia pseudotsugata multicapsid polyhedrosis virus</name>
    <name type="common">OpMNPV</name>
    <dbReference type="NCBI Taxonomy" id="262177"/>
    <lineage>
        <taxon>Viruses</taxon>
        <taxon>Viruses incertae sedis</taxon>
        <taxon>Naldaviricetes</taxon>
        <taxon>Lefavirales</taxon>
        <taxon>Baculoviridae</taxon>
        <taxon>Alphabaculovirus</taxon>
        <taxon>Alphabaculovirus orpseudotsugatae</taxon>
    </lineage>
</organism>
<accession>O10358</accession>
<gene>
    <name type="ORF">ORF119</name>
</gene>
<evidence type="ECO:0000255" key="1"/>
<dbReference type="EMBL" id="U75930">
    <property type="protein sequence ID" value="AAC59118.1"/>
    <property type="molecule type" value="Genomic_DNA"/>
</dbReference>
<dbReference type="RefSeq" id="NP_046275.1">
    <property type="nucleotide sequence ID" value="NC_001875.2"/>
</dbReference>
<dbReference type="KEGG" id="vg:912082"/>
<dbReference type="OrthoDB" id="1963at10239"/>
<dbReference type="Proteomes" id="UP000009248">
    <property type="component" value="Genome"/>
</dbReference>
<dbReference type="InterPro" id="IPR007784">
    <property type="entry name" value="PIR"/>
</dbReference>
<dbReference type="Pfam" id="PF05092">
    <property type="entry name" value="PIF"/>
    <property type="match status" value="1"/>
</dbReference>
<name>Y119_NPVOP</name>
<organismHost>
    <name type="scientific">Orgyia pseudotsugata</name>
    <name type="common">Douglas-fir tussock moth</name>
    <dbReference type="NCBI Taxonomy" id="33414"/>
</organismHost>
<reference key="1">
    <citation type="journal article" date="1997" name="Virology">
        <title>The sequence of the Orgyia pseudotsugata multinucleocapsid nuclear polyhedrosis virus genome.</title>
        <authorList>
            <person name="Ahrens C.H."/>
            <person name="Russell R.R."/>
            <person name="Funk C.J."/>
            <person name="Evans J."/>
            <person name="Harwood S."/>
            <person name="Rohrmann G.F."/>
        </authorList>
    </citation>
    <scope>NUCLEOTIDE SEQUENCE [LARGE SCALE GENOMIC DNA]</scope>
</reference>
<protein>
    <recommendedName>
        <fullName>Uncharacterized 59.0 kDa protein</fullName>
    </recommendedName>
</protein>
<sequence length="529" mass="58984">MYFLILILVLLLIMVAAATAYVNLIDVHHEDVRPPLQMFDTGNVPLIEPPGEIVTEGNAHECHKALTPCDTHADCNACREGLANCQLFDEETMVQMRDADGNEQSATIRAGESYCFALDRERARSCNPGTGVWLLAQTETGFALLCSCLRPGLVTQLNMYEDCNVPVGCAPHGHVAGVGADARCVFDEGYVIDYDAATETPFCRPRTVRDVLFDEAFFPRAPCADGQVRLDHPGLNDYYRRYFRIEDICVVDPCSVDPISGRRTSGRLFYHAADGVEVSGCNCPAADGLLPVFNRHVADSGMVPRGDRTVANACLHPFNVHMLALRHVDYKFFWARPDHDEVADADVVFQADERQLSHERYRAMLYPLLRFHPEETSLVWGDSRVLKISVSYDTVLKNALLPPSLFQLFKRKERATSEPACFFPGEGRCIVHNSETCIRRHANGQVWTAETFTGSWCVLSRDGAAIKVWSRAERYPRGAAPAALRLRGFFFNNDRERNTVRVVNTGDMASGAQTDALTQVLDTFSNYSV</sequence>
<proteinExistence type="inferred from homology"/>
<keyword id="KW-1185">Reference proteome</keyword>
<keyword id="KW-0732">Signal</keyword>